<name>A4GCT_HUMAN</name>
<evidence type="ECO:0000250" key="1">
    <source>
        <dbReference type="UniProtKB" id="Q14BT6"/>
    </source>
</evidence>
<evidence type="ECO:0000250" key="2">
    <source>
        <dbReference type="UniProtKB" id="Q9JI93"/>
    </source>
</evidence>
<evidence type="ECO:0000255" key="3"/>
<evidence type="ECO:0000269" key="4">
    <source>
    </source>
</evidence>
<evidence type="ECO:0000269" key="5">
    <source>
    </source>
</evidence>
<evidence type="ECO:0000305" key="6"/>
<evidence type="ECO:0000305" key="7">
    <source>
    </source>
</evidence>
<organism>
    <name type="scientific">Homo sapiens</name>
    <name type="common">Human</name>
    <dbReference type="NCBI Taxonomy" id="9606"/>
    <lineage>
        <taxon>Eukaryota</taxon>
        <taxon>Metazoa</taxon>
        <taxon>Chordata</taxon>
        <taxon>Craniata</taxon>
        <taxon>Vertebrata</taxon>
        <taxon>Euteleostomi</taxon>
        <taxon>Mammalia</taxon>
        <taxon>Eutheria</taxon>
        <taxon>Euarchontoglires</taxon>
        <taxon>Primates</taxon>
        <taxon>Haplorrhini</taxon>
        <taxon>Catarrhini</taxon>
        <taxon>Hominidae</taxon>
        <taxon>Homo</taxon>
    </lineage>
</organism>
<protein>
    <recommendedName>
        <fullName>Alpha-1,4-N-acetylglucosaminyltransferase</fullName>
        <shortName>Alpha4GnT</shortName>
        <ecNumber evidence="4">2.4.1.-</ecNumber>
    </recommendedName>
</protein>
<dbReference type="EC" id="2.4.1.-" evidence="4"/>
<dbReference type="EMBL" id="AF141315">
    <property type="protein sequence ID" value="AAD48406.1"/>
    <property type="molecule type" value="mRNA"/>
</dbReference>
<dbReference type="EMBL" id="BC119639">
    <property type="protein sequence ID" value="AAI19640.1"/>
    <property type="molecule type" value="mRNA"/>
</dbReference>
<dbReference type="EMBL" id="BC119640">
    <property type="protein sequence ID" value="AAI19641.1"/>
    <property type="molecule type" value="mRNA"/>
</dbReference>
<dbReference type="CCDS" id="CCDS3097.1"/>
<dbReference type="RefSeq" id="NP_057245.1">
    <property type="nucleotide sequence ID" value="NM_016161.3"/>
</dbReference>
<dbReference type="RefSeq" id="XP_016862032.1">
    <property type="nucleotide sequence ID" value="XM_017006543.3"/>
</dbReference>
<dbReference type="RefSeq" id="XP_016862033.1">
    <property type="nucleotide sequence ID" value="XM_017006544.2"/>
</dbReference>
<dbReference type="RefSeq" id="XP_054202697.1">
    <property type="nucleotide sequence ID" value="XM_054346722.1"/>
</dbReference>
<dbReference type="RefSeq" id="XP_054202698.1">
    <property type="nucleotide sequence ID" value="XM_054346723.1"/>
</dbReference>
<dbReference type="SMR" id="Q9UNA3"/>
<dbReference type="BioGRID" id="119330">
    <property type="interactions" value="59"/>
</dbReference>
<dbReference type="FunCoup" id="Q9UNA3">
    <property type="interactions" value="37"/>
</dbReference>
<dbReference type="IntAct" id="Q9UNA3">
    <property type="interactions" value="42"/>
</dbReference>
<dbReference type="STRING" id="9606.ENSP00000236709"/>
<dbReference type="CAZy" id="GT32">
    <property type="family name" value="Glycosyltransferase Family 32"/>
</dbReference>
<dbReference type="GlyCosmos" id="Q9UNA3">
    <property type="glycosylation" value="4 sites, No reported glycans"/>
</dbReference>
<dbReference type="GlyGen" id="Q9UNA3">
    <property type="glycosylation" value="4 sites"/>
</dbReference>
<dbReference type="PhosphoSitePlus" id="Q9UNA3"/>
<dbReference type="BioMuta" id="A4GNT"/>
<dbReference type="DMDM" id="25452797"/>
<dbReference type="MassIVE" id="Q9UNA3"/>
<dbReference type="PaxDb" id="9606-ENSP00000236709"/>
<dbReference type="PeptideAtlas" id="Q9UNA3"/>
<dbReference type="Antibodypedia" id="2373">
    <property type="antibodies" value="354 antibodies from 34 providers"/>
</dbReference>
<dbReference type="DNASU" id="51146"/>
<dbReference type="Ensembl" id="ENST00000236709.4">
    <property type="protein sequence ID" value="ENSP00000236709.3"/>
    <property type="gene ID" value="ENSG00000118017.4"/>
</dbReference>
<dbReference type="GeneID" id="51146"/>
<dbReference type="KEGG" id="hsa:51146"/>
<dbReference type="MANE-Select" id="ENST00000236709.4">
    <property type="protein sequence ID" value="ENSP00000236709.3"/>
    <property type="RefSeq nucleotide sequence ID" value="NM_016161.3"/>
    <property type="RefSeq protein sequence ID" value="NP_057245.1"/>
</dbReference>
<dbReference type="UCSC" id="uc003ers.2">
    <property type="organism name" value="human"/>
</dbReference>
<dbReference type="AGR" id="HGNC:17968"/>
<dbReference type="CTD" id="51146"/>
<dbReference type="DisGeNET" id="51146"/>
<dbReference type="GeneCards" id="A4GNT"/>
<dbReference type="HGNC" id="HGNC:17968">
    <property type="gene designation" value="A4GNT"/>
</dbReference>
<dbReference type="HPA" id="ENSG00000118017">
    <property type="expression patterns" value="Tissue enriched (stomach)"/>
</dbReference>
<dbReference type="neXtProt" id="NX_Q9UNA3"/>
<dbReference type="OpenTargets" id="ENSG00000118017"/>
<dbReference type="PharmGKB" id="PA134960042"/>
<dbReference type="VEuPathDB" id="HostDB:ENSG00000118017"/>
<dbReference type="eggNOG" id="KOG1928">
    <property type="taxonomic scope" value="Eukaryota"/>
</dbReference>
<dbReference type="GeneTree" id="ENSGT00510000047981"/>
<dbReference type="HOGENOM" id="CLU_049512_2_0_1"/>
<dbReference type="InParanoid" id="Q9UNA3"/>
<dbReference type="OMA" id="IWDCMEN"/>
<dbReference type="OrthoDB" id="407609at2759"/>
<dbReference type="PAN-GO" id="Q9UNA3">
    <property type="GO annotations" value="2 GO annotations based on evolutionary models"/>
</dbReference>
<dbReference type="PhylomeDB" id="Q9UNA3"/>
<dbReference type="TreeFam" id="TF324053"/>
<dbReference type="PathwayCommons" id="Q9UNA3"/>
<dbReference type="Reactome" id="R-HSA-913709">
    <property type="pathway name" value="O-linked glycosylation of mucins"/>
</dbReference>
<dbReference type="SignaLink" id="Q9UNA3"/>
<dbReference type="UniPathway" id="UPA00378"/>
<dbReference type="BioGRID-ORCS" id="51146">
    <property type="hits" value="6 hits in 1138 CRISPR screens"/>
</dbReference>
<dbReference type="ChiTaRS" id="A4GNT">
    <property type="organism name" value="human"/>
</dbReference>
<dbReference type="GenomeRNAi" id="51146"/>
<dbReference type="Pharos" id="Q9UNA3">
    <property type="development level" value="Tbio"/>
</dbReference>
<dbReference type="PRO" id="PR:Q9UNA3"/>
<dbReference type="Proteomes" id="UP000005640">
    <property type="component" value="Chromosome 3"/>
</dbReference>
<dbReference type="RNAct" id="Q9UNA3">
    <property type="molecule type" value="protein"/>
</dbReference>
<dbReference type="Bgee" id="ENSG00000118017">
    <property type="expression patterns" value="Expressed in pylorus and 70 other cell types or tissues"/>
</dbReference>
<dbReference type="GO" id="GO:0000139">
    <property type="term" value="C:Golgi membrane"/>
    <property type="evidence" value="ECO:0000304"/>
    <property type="project" value="Reactome"/>
</dbReference>
<dbReference type="GO" id="GO:0016020">
    <property type="term" value="C:membrane"/>
    <property type="evidence" value="ECO:0000304"/>
    <property type="project" value="ProtInc"/>
</dbReference>
<dbReference type="GO" id="GO:0008375">
    <property type="term" value="F:acetylglucosaminyltransferase activity"/>
    <property type="evidence" value="ECO:0000314"/>
    <property type="project" value="MGI"/>
</dbReference>
<dbReference type="GO" id="GO:0005975">
    <property type="term" value="P:carbohydrate metabolic process"/>
    <property type="evidence" value="ECO:0000304"/>
    <property type="project" value="ProtInc"/>
</dbReference>
<dbReference type="GO" id="GO:0050673">
    <property type="term" value="P:epithelial cell proliferation"/>
    <property type="evidence" value="ECO:0007669"/>
    <property type="project" value="Ensembl"/>
</dbReference>
<dbReference type="GO" id="GO:0009101">
    <property type="term" value="P:glycoprotein biosynthetic process"/>
    <property type="evidence" value="ECO:0000314"/>
    <property type="project" value="MGI"/>
</dbReference>
<dbReference type="GO" id="GO:0050680">
    <property type="term" value="P:negative regulation of epithelial cell proliferation"/>
    <property type="evidence" value="ECO:0007669"/>
    <property type="project" value="Ensembl"/>
</dbReference>
<dbReference type="GO" id="GO:0016266">
    <property type="term" value="P:O-glycan processing"/>
    <property type="evidence" value="ECO:0000304"/>
    <property type="project" value="Reactome"/>
</dbReference>
<dbReference type="GO" id="GO:0006493">
    <property type="term" value="P:protein O-linked glycosylation"/>
    <property type="evidence" value="ECO:0000318"/>
    <property type="project" value="GO_Central"/>
</dbReference>
<dbReference type="FunFam" id="3.90.550.20:FF:000003">
    <property type="entry name" value="Lactosylceramide 4-alpha-galactosyltransferase"/>
    <property type="match status" value="1"/>
</dbReference>
<dbReference type="Gene3D" id="3.90.550.20">
    <property type="match status" value="1"/>
</dbReference>
<dbReference type="InterPro" id="IPR007652">
    <property type="entry name" value="A1-4-GlycosylTfrase_dom"/>
</dbReference>
<dbReference type="InterPro" id="IPR051981">
    <property type="entry name" value="Glycosyltransf_32"/>
</dbReference>
<dbReference type="InterPro" id="IPR007577">
    <property type="entry name" value="GlycoTrfase_DXD_sugar-bd_CS"/>
</dbReference>
<dbReference type="InterPro" id="IPR029044">
    <property type="entry name" value="Nucleotide-diphossugar_trans"/>
</dbReference>
<dbReference type="PANTHER" id="PTHR12042:SF16">
    <property type="entry name" value="ALPHA-1,4-N-ACETYLGLUCOSAMINYLTRANSFERASE"/>
    <property type="match status" value="1"/>
</dbReference>
<dbReference type="PANTHER" id="PTHR12042">
    <property type="entry name" value="LACTOSYLCERAMIDE 4-ALPHA-GALACTOSYLTRANSFERASE ALPHA- 1,4-GALACTOSYLTRANSFERASE"/>
    <property type="match status" value="1"/>
</dbReference>
<dbReference type="Pfam" id="PF04572">
    <property type="entry name" value="Gb3_synth"/>
    <property type="match status" value="1"/>
</dbReference>
<dbReference type="Pfam" id="PF04488">
    <property type="entry name" value="Gly_transf_sug"/>
    <property type="match status" value="1"/>
</dbReference>
<dbReference type="SUPFAM" id="SSF53448">
    <property type="entry name" value="Nucleotide-diphospho-sugar transferases"/>
    <property type="match status" value="1"/>
</dbReference>
<gene>
    <name type="primary">A4GNT</name>
</gene>
<comment type="function">
    <text evidence="1 4">Catalyzes the transfer of N-acetylglucosamine (GlcNAc) to core 2 branched O-glycans (PubMed:10430883). Necessary for the synthesis of type III mucin which is specifically produced in the stomach, duodenum, and pancreatic duct (PubMed:10430883). May protect against inflammation-associated gastric adenocarcinomas (By similarity).</text>
</comment>
<comment type="pathway">
    <text evidence="7">Protein modification; protein glycosylation.</text>
</comment>
<comment type="subcellular location">
    <subcellularLocation>
        <location evidence="6">Golgi apparatus membrane</location>
        <topology evidence="3">Single-pass type II membrane protein</topology>
    </subcellularLocation>
</comment>
<comment type="tissue specificity">
    <text evidence="4">Detected in stomach and pancreas.</text>
</comment>
<comment type="domain">
    <text evidence="2">The conserved DXD motif is involved in enzyme activity.</text>
</comment>
<comment type="similarity">
    <text evidence="6">Belongs to the glycosyltransferase 32 family.</text>
</comment>
<comment type="online information" name="Functional Glycomics Gateway - GTase">
    <link uri="http://www.functionalglycomics.org/glycomics/molecule/jsp/glycoEnzyme/viewGlycoEnzyme.jsp?gbpId=gt_hum_532"/>
    <text>Alpha-1,4-N-acetylglucosaminyltransferase</text>
</comment>
<proteinExistence type="evidence at protein level"/>
<accession>Q9UNA3</accession>
<accession>Q0VDK1</accession>
<accession>Q0VDK2</accession>
<keyword id="KW-0325">Glycoprotein</keyword>
<keyword id="KW-0328">Glycosyltransferase</keyword>
<keyword id="KW-0333">Golgi apparatus</keyword>
<keyword id="KW-0472">Membrane</keyword>
<keyword id="KW-1267">Proteomics identification</keyword>
<keyword id="KW-1185">Reference proteome</keyword>
<keyword id="KW-0735">Signal-anchor</keyword>
<keyword id="KW-0808">Transferase</keyword>
<keyword id="KW-0812">Transmembrane</keyword>
<keyword id="KW-1133">Transmembrane helix</keyword>
<sequence>MRKELQLSLSVTLLLVCGFLYQFTLKSSCLFCLPSFKSHQGLEALLSHRRGIVFLETSERMEPPHLVSCSVESAAKIYPEWPVVFFMKGLTDSTPMPSNSTYPAFSFLSAIDNVFLFPLDMKRLLEDTPLFSWYNQINASAERNWLHISSDASRLAIIWKYGGIYMDTDVISIRPIPEENFLAAQASRYSSNGIFGFLPHHPFLWECMENFVEHYNSAIWGNQGPELMTRMLRVWCKLEDFQEVSDLRCLNISFLHPQRFYPISYREWRRYYEVWDTEPSFNVSYALHLWNHMNQEGRAVIRGSNTLVENLYRKHCPRTYRDLIKGPEGSVTGELGPGNK</sequence>
<reference key="1">
    <citation type="journal article" date="1999" name="Proc. Natl. Acad. Sci. U.S.A.">
        <title>Expression cloning of a human alpha1, 4-N-acetylglucosaminyltransferase that forms GlcNAcalpha1--&gt;4Galbeta--&gt;R, a glycan specifically expressed in the gastric gland mucous cell-type mucin.</title>
        <authorList>
            <person name="Nakayama J."/>
            <person name="Yeh J.-C."/>
            <person name="Misra A.K."/>
            <person name="Ito S."/>
            <person name="Katsuyama T."/>
            <person name="Fukuda M."/>
        </authorList>
    </citation>
    <scope>NUCLEOTIDE SEQUENCE [MRNA]</scope>
    <scope>FUNCTION</scope>
    <scope>CATALYTIC ACTIVITY</scope>
    <scope>PATHWAY</scope>
    <scope>TISSUE SPECIFICITY</scope>
    <source>
        <tissue>Stomach</tissue>
    </source>
</reference>
<reference key="2">
    <citation type="journal article" date="2004" name="Genome Res.">
        <title>The status, quality, and expansion of the NIH full-length cDNA project: the Mammalian Gene Collection (MGC).</title>
        <authorList>
            <consortium name="The MGC Project Team"/>
        </authorList>
    </citation>
    <scope>NUCLEOTIDE SEQUENCE [LARGE SCALE MRNA]</scope>
    <scope>VARIANT ASP-218</scope>
</reference>
<feature type="chain" id="PRO_0000080583" description="Alpha-1,4-N-acetylglucosaminyltransferase">
    <location>
        <begin position="1"/>
        <end position="340"/>
    </location>
</feature>
<feature type="topological domain" description="Cytoplasmic" evidence="3">
    <location>
        <begin position="1"/>
        <end position="4"/>
    </location>
</feature>
<feature type="transmembrane region" description="Helical; Signal-anchor for type II membrane protein" evidence="3">
    <location>
        <begin position="5"/>
        <end position="25"/>
    </location>
</feature>
<feature type="topological domain" description="Lumenal" evidence="3">
    <location>
        <begin position="26"/>
        <end position="340"/>
    </location>
</feature>
<feature type="short sequence motif" description="DXD motif" evidence="2">
    <location>
        <begin position="167"/>
        <end position="169"/>
    </location>
</feature>
<feature type="glycosylation site" description="N-linked (GlcNAc...) asparagine" evidence="3">
    <location>
        <position position="99"/>
    </location>
</feature>
<feature type="glycosylation site" description="N-linked (GlcNAc...) asparagine" evidence="3">
    <location>
        <position position="138"/>
    </location>
</feature>
<feature type="glycosylation site" description="N-linked (GlcNAc...) asparagine" evidence="3">
    <location>
        <position position="251"/>
    </location>
</feature>
<feature type="glycosylation site" description="N-linked (GlcNAc...) asparagine" evidence="3">
    <location>
        <position position="282"/>
    </location>
</feature>
<feature type="sequence variant" id="VAR_022096" description="In dbSNP:rs2246945." evidence="5">
    <original>A</original>
    <variation>D</variation>
    <location>
        <position position="218"/>
    </location>
</feature>